<reference key="1">
    <citation type="journal article" date="2001" name="Science">
        <title>Comparative genomics of Listeria species.</title>
        <authorList>
            <person name="Glaser P."/>
            <person name="Frangeul L."/>
            <person name="Buchrieser C."/>
            <person name="Rusniok C."/>
            <person name="Amend A."/>
            <person name="Baquero F."/>
            <person name="Berche P."/>
            <person name="Bloecker H."/>
            <person name="Brandt P."/>
            <person name="Chakraborty T."/>
            <person name="Charbit A."/>
            <person name="Chetouani F."/>
            <person name="Couve E."/>
            <person name="de Daruvar A."/>
            <person name="Dehoux P."/>
            <person name="Domann E."/>
            <person name="Dominguez-Bernal G."/>
            <person name="Duchaud E."/>
            <person name="Durant L."/>
            <person name="Dussurget O."/>
            <person name="Entian K.-D."/>
            <person name="Fsihi H."/>
            <person name="Garcia-del Portillo F."/>
            <person name="Garrido P."/>
            <person name="Gautier L."/>
            <person name="Goebel W."/>
            <person name="Gomez-Lopez N."/>
            <person name="Hain T."/>
            <person name="Hauf J."/>
            <person name="Jackson D."/>
            <person name="Jones L.-M."/>
            <person name="Kaerst U."/>
            <person name="Kreft J."/>
            <person name="Kuhn M."/>
            <person name="Kunst F."/>
            <person name="Kurapkat G."/>
            <person name="Madueno E."/>
            <person name="Maitournam A."/>
            <person name="Mata Vicente J."/>
            <person name="Ng E."/>
            <person name="Nedjari H."/>
            <person name="Nordsiek G."/>
            <person name="Novella S."/>
            <person name="de Pablos B."/>
            <person name="Perez-Diaz J.-C."/>
            <person name="Purcell R."/>
            <person name="Remmel B."/>
            <person name="Rose M."/>
            <person name="Schlueter T."/>
            <person name="Simoes N."/>
            <person name="Tierrez A."/>
            <person name="Vazquez-Boland J.-A."/>
            <person name="Voss H."/>
            <person name="Wehland J."/>
            <person name="Cossart P."/>
        </authorList>
    </citation>
    <scope>NUCLEOTIDE SEQUENCE [LARGE SCALE GENOMIC DNA]</scope>
    <source>
        <strain>ATCC BAA-679 / EGD-e</strain>
    </source>
</reference>
<dbReference type="EC" id="6.1.1.19" evidence="1"/>
<dbReference type="EMBL" id="AL591983">
    <property type="protein sequence ID" value="CAD00639.1"/>
    <property type="molecule type" value="Genomic_DNA"/>
</dbReference>
<dbReference type="PIR" id="AI1394">
    <property type="entry name" value="AI1394"/>
</dbReference>
<dbReference type="RefSeq" id="NP_466084.1">
    <property type="nucleotide sequence ID" value="NC_003210.1"/>
</dbReference>
<dbReference type="RefSeq" id="WP_003723609.1">
    <property type="nucleotide sequence ID" value="NZ_CP149495.1"/>
</dbReference>
<dbReference type="SMR" id="Q8Y493"/>
<dbReference type="STRING" id="169963.gene:17595272"/>
<dbReference type="PaxDb" id="169963-lmo2561"/>
<dbReference type="EnsemblBacteria" id="CAD00639">
    <property type="protein sequence ID" value="CAD00639"/>
    <property type="gene ID" value="CAD00639"/>
</dbReference>
<dbReference type="GeneID" id="984764"/>
<dbReference type="KEGG" id="lmo:lmo2561"/>
<dbReference type="PATRIC" id="fig|169963.11.peg.2624"/>
<dbReference type="eggNOG" id="COG0018">
    <property type="taxonomic scope" value="Bacteria"/>
</dbReference>
<dbReference type="HOGENOM" id="CLU_006406_0_1_9"/>
<dbReference type="OrthoDB" id="9805987at2"/>
<dbReference type="PhylomeDB" id="Q8Y493"/>
<dbReference type="BioCyc" id="LMON169963:LMO2561-MONOMER"/>
<dbReference type="Proteomes" id="UP000000817">
    <property type="component" value="Chromosome"/>
</dbReference>
<dbReference type="GO" id="GO:0005737">
    <property type="term" value="C:cytoplasm"/>
    <property type="evidence" value="ECO:0007669"/>
    <property type="project" value="UniProtKB-SubCell"/>
</dbReference>
<dbReference type="GO" id="GO:0004814">
    <property type="term" value="F:arginine-tRNA ligase activity"/>
    <property type="evidence" value="ECO:0000318"/>
    <property type="project" value="GO_Central"/>
</dbReference>
<dbReference type="GO" id="GO:0005524">
    <property type="term" value="F:ATP binding"/>
    <property type="evidence" value="ECO:0007669"/>
    <property type="project" value="UniProtKB-UniRule"/>
</dbReference>
<dbReference type="GO" id="GO:0006420">
    <property type="term" value="P:arginyl-tRNA aminoacylation"/>
    <property type="evidence" value="ECO:0000318"/>
    <property type="project" value="GO_Central"/>
</dbReference>
<dbReference type="CDD" id="cd07956">
    <property type="entry name" value="Anticodon_Ia_Arg"/>
    <property type="match status" value="1"/>
</dbReference>
<dbReference type="CDD" id="cd00671">
    <property type="entry name" value="ArgRS_core"/>
    <property type="match status" value="1"/>
</dbReference>
<dbReference type="FunFam" id="1.10.730.10:FF:000008">
    <property type="entry name" value="Arginine--tRNA ligase"/>
    <property type="match status" value="1"/>
</dbReference>
<dbReference type="FunFam" id="3.30.1360.70:FF:000003">
    <property type="entry name" value="Arginine--tRNA ligase"/>
    <property type="match status" value="1"/>
</dbReference>
<dbReference type="FunFam" id="3.40.50.620:FF:000062">
    <property type="entry name" value="Arginine--tRNA ligase"/>
    <property type="match status" value="1"/>
</dbReference>
<dbReference type="Gene3D" id="3.30.1360.70">
    <property type="entry name" value="Arginyl tRNA synthetase N-terminal domain"/>
    <property type="match status" value="1"/>
</dbReference>
<dbReference type="Gene3D" id="3.40.50.620">
    <property type="entry name" value="HUPs"/>
    <property type="match status" value="1"/>
</dbReference>
<dbReference type="Gene3D" id="1.10.730.10">
    <property type="entry name" value="Isoleucyl-tRNA Synthetase, Domain 1"/>
    <property type="match status" value="1"/>
</dbReference>
<dbReference type="HAMAP" id="MF_00123">
    <property type="entry name" value="Arg_tRNA_synth"/>
    <property type="match status" value="1"/>
</dbReference>
<dbReference type="InterPro" id="IPR001412">
    <property type="entry name" value="aa-tRNA-synth_I_CS"/>
</dbReference>
<dbReference type="InterPro" id="IPR001278">
    <property type="entry name" value="Arg-tRNA-ligase"/>
</dbReference>
<dbReference type="InterPro" id="IPR005148">
    <property type="entry name" value="Arg-tRNA-synth_N"/>
</dbReference>
<dbReference type="InterPro" id="IPR036695">
    <property type="entry name" value="Arg-tRNA-synth_N_sf"/>
</dbReference>
<dbReference type="InterPro" id="IPR035684">
    <property type="entry name" value="ArgRS_core"/>
</dbReference>
<dbReference type="InterPro" id="IPR008909">
    <property type="entry name" value="DALR_anticod-bd"/>
</dbReference>
<dbReference type="InterPro" id="IPR014729">
    <property type="entry name" value="Rossmann-like_a/b/a_fold"/>
</dbReference>
<dbReference type="InterPro" id="IPR009080">
    <property type="entry name" value="tRNAsynth_Ia_anticodon-bd"/>
</dbReference>
<dbReference type="NCBIfam" id="TIGR00456">
    <property type="entry name" value="argS"/>
    <property type="match status" value="1"/>
</dbReference>
<dbReference type="PANTHER" id="PTHR11956:SF5">
    <property type="entry name" value="ARGININE--TRNA LIGASE, CYTOPLASMIC"/>
    <property type="match status" value="1"/>
</dbReference>
<dbReference type="PANTHER" id="PTHR11956">
    <property type="entry name" value="ARGINYL-TRNA SYNTHETASE"/>
    <property type="match status" value="1"/>
</dbReference>
<dbReference type="Pfam" id="PF03485">
    <property type="entry name" value="Arg_tRNA_synt_N"/>
    <property type="match status" value="1"/>
</dbReference>
<dbReference type="Pfam" id="PF05746">
    <property type="entry name" value="DALR_1"/>
    <property type="match status" value="1"/>
</dbReference>
<dbReference type="Pfam" id="PF00750">
    <property type="entry name" value="tRNA-synt_1d"/>
    <property type="match status" value="1"/>
</dbReference>
<dbReference type="PRINTS" id="PR01038">
    <property type="entry name" value="TRNASYNTHARG"/>
</dbReference>
<dbReference type="SMART" id="SM01016">
    <property type="entry name" value="Arg_tRNA_synt_N"/>
    <property type="match status" value="1"/>
</dbReference>
<dbReference type="SMART" id="SM00836">
    <property type="entry name" value="DALR_1"/>
    <property type="match status" value="1"/>
</dbReference>
<dbReference type="SUPFAM" id="SSF47323">
    <property type="entry name" value="Anticodon-binding domain of a subclass of class I aminoacyl-tRNA synthetases"/>
    <property type="match status" value="1"/>
</dbReference>
<dbReference type="SUPFAM" id="SSF55190">
    <property type="entry name" value="Arginyl-tRNA synthetase (ArgRS), N-terminal 'additional' domain"/>
    <property type="match status" value="1"/>
</dbReference>
<dbReference type="SUPFAM" id="SSF52374">
    <property type="entry name" value="Nucleotidylyl transferase"/>
    <property type="match status" value="1"/>
</dbReference>
<dbReference type="PROSITE" id="PS00178">
    <property type="entry name" value="AA_TRNA_LIGASE_I"/>
    <property type="match status" value="1"/>
</dbReference>
<evidence type="ECO:0000255" key="1">
    <source>
        <dbReference type="HAMAP-Rule" id="MF_00123"/>
    </source>
</evidence>
<feature type="chain" id="PRO_0000151574" description="Arginine--tRNA ligase">
    <location>
        <begin position="1"/>
        <end position="556"/>
    </location>
</feature>
<feature type="short sequence motif" description="'HIGH' region">
    <location>
        <begin position="132"/>
        <end position="142"/>
    </location>
</feature>
<protein>
    <recommendedName>
        <fullName evidence="1">Arginine--tRNA ligase</fullName>
        <ecNumber evidence="1">6.1.1.19</ecNumber>
    </recommendedName>
    <alternativeName>
        <fullName evidence="1">Arginyl-tRNA synthetase</fullName>
        <shortName evidence="1">ArgRS</shortName>
    </alternativeName>
</protein>
<keyword id="KW-0030">Aminoacyl-tRNA synthetase</keyword>
<keyword id="KW-0067">ATP-binding</keyword>
<keyword id="KW-0963">Cytoplasm</keyword>
<keyword id="KW-0436">Ligase</keyword>
<keyword id="KW-0547">Nucleotide-binding</keyword>
<keyword id="KW-0648">Protein biosynthesis</keyword>
<keyword id="KW-1185">Reference proteome</keyword>
<name>SYR_LISMO</name>
<accession>Q8Y493</accession>
<gene>
    <name evidence="1" type="primary">argS</name>
    <name type="ordered locus">lmo2561</name>
</gene>
<proteinExistence type="inferred from homology"/>
<organism>
    <name type="scientific">Listeria monocytogenes serovar 1/2a (strain ATCC BAA-679 / EGD-e)</name>
    <dbReference type="NCBI Taxonomy" id="169963"/>
    <lineage>
        <taxon>Bacteria</taxon>
        <taxon>Bacillati</taxon>
        <taxon>Bacillota</taxon>
        <taxon>Bacilli</taxon>
        <taxon>Bacillales</taxon>
        <taxon>Listeriaceae</taxon>
        <taxon>Listeria</taxon>
    </lineage>
</organism>
<sequence length="556" mass="62836">MNVMQENQIKLIEHIKQAVVQAVGLEETEVPEILLEVPKDKKHGDYSTNIAMQLARVAKKAPRQIAESIVPELKKDNKLIKEVEIAGPGFINFYLDNAYLTDLVPVILTEDKKYGESDFGKGEKFQIEFVSANPTGDLHLGHARGAAIGDSLANIMKMAGFDVSREYYINDAGNQINNLVLSAEARYFEALGLESEFPEDGYRGADIISLGKDLAAKYGDKYVHTSEEERRSIFRVDALAFETGKLRADLEEFRVSFDEWFSETSLYEENKVLPALERLRENGYIYEQDGATWLRTTDFEDDKDRVLIKSDGSYTYFLPDIAYHLNKLERGFDVLIDIWGADHHGYIPRMRAAIEALGYSPNQLEVEIIQLVHLFEDGVQVKMSKRTGKSVTMRDLIEEVGLDATRYFFAMRSSDTHMNFDMSLAKSTSNDNPVYYVQYAHARISSILRSGKEQGLEVTKDADMSLLQTEAEYDLLKVLGEFADVVAEAAAKRAPHRIVRYLNDLASAFHRFYNSNKVLDMDNLEVTKARLALIKTAQITLRNGLTLLGVSAPEKM</sequence>
<comment type="catalytic activity">
    <reaction evidence="1">
        <text>tRNA(Arg) + L-arginine + ATP = L-arginyl-tRNA(Arg) + AMP + diphosphate</text>
        <dbReference type="Rhea" id="RHEA:20301"/>
        <dbReference type="Rhea" id="RHEA-COMP:9658"/>
        <dbReference type="Rhea" id="RHEA-COMP:9673"/>
        <dbReference type="ChEBI" id="CHEBI:30616"/>
        <dbReference type="ChEBI" id="CHEBI:32682"/>
        <dbReference type="ChEBI" id="CHEBI:33019"/>
        <dbReference type="ChEBI" id="CHEBI:78442"/>
        <dbReference type="ChEBI" id="CHEBI:78513"/>
        <dbReference type="ChEBI" id="CHEBI:456215"/>
        <dbReference type="EC" id="6.1.1.19"/>
    </reaction>
</comment>
<comment type="subunit">
    <text evidence="1">Monomer.</text>
</comment>
<comment type="subcellular location">
    <subcellularLocation>
        <location evidence="1">Cytoplasm</location>
    </subcellularLocation>
</comment>
<comment type="similarity">
    <text evidence="1">Belongs to the class-I aminoacyl-tRNA synthetase family.</text>
</comment>